<keyword id="KW-0903">Direct protein sequencing</keyword>
<keyword id="KW-0873">Pyrrolidone carboxylic acid</keyword>
<keyword id="KW-0964">Secreted</keyword>
<keyword id="KW-0732">Signal</keyword>
<keyword id="KW-0800">Toxin</keyword>
<comment type="function">
    <text evidence="5">Probable toxin.</text>
</comment>
<comment type="subcellular location">
    <subcellularLocation>
        <location evidence="3">Secreted</location>
    </subcellularLocation>
</comment>
<comment type="tissue specificity">
    <text evidence="6">Expressed by the venom duct.</text>
</comment>
<comment type="mass spectrometry" mass="1890.8" method="MALDI" evidence="3">
    <molecule>Conotoxin ba1890.8</molecule>
</comment>
<comment type="mass spectrometry" mass="1560.9" method="MALDI" evidence="3">
    <molecule>Conotoxin ba1560.9</molecule>
</comment>
<comment type="miscellaneous">
    <text evidence="5">The mature peptide does not contain cysteine residue.</text>
</comment>
<comment type="similarity">
    <text evidence="5">Belongs to the conotoxin H superfamily.</text>
</comment>
<protein>
    <recommendedName>
        <fullName evidence="4">Conotoxin ba1890.8</fullName>
    </recommendedName>
    <component>
        <recommendedName>
            <fullName evidence="4">Conotoxin ba1560.9</fullName>
        </recommendedName>
    </component>
</protein>
<sequence length="78" mass="8363">MKTSGRLLFLCLAVGLLLESQAHPIADAEDATRNVGSDGTSVELSEILERGQDSSAEKGQRQNDHDVDESGHDIPFPS</sequence>
<reference key="1">
    <citation type="journal article" date="2021" name="Mar. Drugs">
        <title>Diversity of Conopeptides and Conoenzymes from the Venom Duct of the Marine Cone Snail Conus bayani as Determined from Transcriptomic and Proteomic Analyses.</title>
        <authorList>
            <person name="Rajaian Pushpabai R."/>
            <person name="Wilson Alphonse C.R."/>
            <person name="Mani R."/>
            <person name="Arun Apte D."/>
            <person name="Franklin J.B."/>
        </authorList>
    </citation>
    <scope>NUCLEOTIDE SEQUENCE [MRNA]</scope>
    <scope>PROTEIN SEQUENCE OF 62-75</scope>
    <scope>MASS SPECTROMETRY</scope>
    <scope>SUBCELLULAR LOCATION</scope>
    <scope>PYROGLUTAMATE FORMATION AT GLN-62</scope>
    <source>
        <tissue>Venom</tissue>
        <tissue>Venom duct</tissue>
    </source>
</reference>
<evidence type="ECO:0000255" key="1"/>
<evidence type="ECO:0000256" key="2">
    <source>
        <dbReference type="SAM" id="MobiDB-lite"/>
    </source>
</evidence>
<evidence type="ECO:0000269" key="3">
    <source>
    </source>
</evidence>
<evidence type="ECO:0000303" key="4">
    <source>
    </source>
</evidence>
<evidence type="ECO:0000305" key="5"/>
<evidence type="ECO:0000305" key="6">
    <source>
    </source>
</evidence>
<proteinExistence type="evidence at protein level"/>
<dbReference type="GO" id="GO:0005576">
    <property type="term" value="C:extracellular region"/>
    <property type="evidence" value="ECO:0007669"/>
    <property type="project" value="UniProtKB-SubCell"/>
</dbReference>
<dbReference type="GO" id="GO:0090729">
    <property type="term" value="F:toxin activity"/>
    <property type="evidence" value="ECO:0007669"/>
    <property type="project" value="UniProtKB-KW"/>
</dbReference>
<feature type="signal peptide" evidence="1">
    <location>
        <begin position="1"/>
        <end position="22"/>
    </location>
</feature>
<feature type="propeptide" id="PRO_0000455000" evidence="6">
    <location>
        <begin position="23"/>
        <end position="61"/>
    </location>
</feature>
<feature type="peptide" id="PRO_0000455001" description="Conotoxin ba1890.8" evidence="3">
    <location>
        <begin position="62"/>
        <end position="78"/>
    </location>
</feature>
<feature type="peptide" id="PRO_0000455002" description="Conotoxin ba1560.9" evidence="3">
    <location>
        <begin position="62"/>
        <end position="75"/>
    </location>
</feature>
<feature type="region of interest" description="Disordered" evidence="2">
    <location>
        <begin position="25"/>
        <end position="78"/>
    </location>
</feature>
<feature type="compositionally biased region" description="Polar residues" evidence="2">
    <location>
        <begin position="34"/>
        <end position="43"/>
    </location>
</feature>
<feature type="compositionally biased region" description="Basic and acidic residues" evidence="2">
    <location>
        <begin position="47"/>
        <end position="72"/>
    </location>
</feature>
<feature type="modified residue" description="Pyrrolidone carboxylic acid" evidence="3">
    <location>
        <position position="62"/>
    </location>
</feature>
<name>CH0_CONBY</name>
<organism>
    <name type="scientific">Conus bayani</name>
    <name type="common">Bayan's cone</name>
    <name type="synonym">Stellaconus bayani</name>
    <dbReference type="NCBI Taxonomy" id="2070216"/>
    <lineage>
        <taxon>Eukaryota</taxon>
        <taxon>Metazoa</taxon>
        <taxon>Spiralia</taxon>
        <taxon>Lophotrochozoa</taxon>
        <taxon>Mollusca</taxon>
        <taxon>Gastropoda</taxon>
        <taxon>Caenogastropoda</taxon>
        <taxon>Neogastropoda</taxon>
        <taxon>Conoidea</taxon>
        <taxon>Conidae</taxon>
        <taxon>Conus</taxon>
        <taxon>Splinoconus</taxon>
    </lineage>
</organism>
<accession>P0DTJ9</accession>